<feature type="chain" id="PRO_0000263698" description="Testis-expressed protein 29">
    <location>
        <begin position="1"/>
        <end position="147"/>
    </location>
</feature>
<feature type="topological domain" description="Extracellular" evidence="1">
    <location>
        <begin position="1"/>
        <end position="57"/>
    </location>
</feature>
<feature type="transmembrane region" description="Helical" evidence="1">
    <location>
        <begin position="58"/>
        <end position="78"/>
    </location>
</feature>
<feature type="topological domain" description="Cytoplasmic" evidence="1">
    <location>
        <begin position="79"/>
        <end position="147"/>
    </location>
</feature>
<feature type="region of interest" description="Disordered" evidence="2">
    <location>
        <begin position="86"/>
        <end position="147"/>
    </location>
</feature>
<feature type="compositionally biased region" description="Polar residues" evidence="2">
    <location>
        <begin position="99"/>
        <end position="108"/>
    </location>
</feature>
<feature type="compositionally biased region" description="Low complexity" evidence="2">
    <location>
        <begin position="109"/>
        <end position="120"/>
    </location>
</feature>
<feature type="compositionally biased region" description="Basic and acidic residues" evidence="2">
    <location>
        <begin position="125"/>
        <end position="135"/>
    </location>
</feature>
<organism>
    <name type="scientific">Bos taurus</name>
    <name type="common">Bovine</name>
    <dbReference type="NCBI Taxonomy" id="9913"/>
    <lineage>
        <taxon>Eukaryota</taxon>
        <taxon>Metazoa</taxon>
        <taxon>Chordata</taxon>
        <taxon>Craniata</taxon>
        <taxon>Vertebrata</taxon>
        <taxon>Euteleostomi</taxon>
        <taxon>Mammalia</taxon>
        <taxon>Eutheria</taxon>
        <taxon>Laurasiatheria</taxon>
        <taxon>Artiodactyla</taxon>
        <taxon>Ruminantia</taxon>
        <taxon>Pecora</taxon>
        <taxon>Bovidae</taxon>
        <taxon>Bovinae</taxon>
        <taxon>Bos</taxon>
    </lineage>
</organism>
<evidence type="ECO:0000255" key="1"/>
<evidence type="ECO:0000256" key="2">
    <source>
        <dbReference type="SAM" id="MobiDB-lite"/>
    </source>
</evidence>
<evidence type="ECO:0000305" key="3"/>
<keyword id="KW-0472">Membrane</keyword>
<keyword id="KW-1185">Reference proteome</keyword>
<keyword id="KW-0812">Transmembrane</keyword>
<keyword id="KW-1133">Transmembrane helix</keyword>
<name>TEX29_BOVIN</name>
<protein>
    <recommendedName>
        <fullName>Testis-expressed protein 29</fullName>
    </recommendedName>
</protein>
<accession>Q3SZT4</accession>
<comment type="subcellular location">
    <subcellularLocation>
        <location evidence="3">Membrane</location>
        <topology evidence="3">Single-pass membrane protein</topology>
    </subcellularLocation>
</comment>
<gene>
    <name type="primary">TEX29</name>
</gene>
<reference key="1">
    <citation type="submission" date="2005-08" db="EMBL/GenBank/DDBJ databases">
        <authorList>
            <consortium name="NIH - Mammalian Gene Collection (MGC) project"/>
        </authorList>
    </citation>
    <scope>NUCLEOTIDE SEQUENCE [LARGE SCALE MRNA]</scope>
    <source>
        <strain>Crossbred X Angus</strain>
        <tissue>Liver</tissue>
    </source>
</reference>
<sequence length="147" mass="16331">MRYAPEFKKSPSHLLKKFAVCDIPLYDICDYNVSRDRCKELGCCFYKGICYEKAVPSYVQVFSALIVIIAGAFVITIIYRVIQESRREKEVPTEAPVSAKSSVQVETQPPSSAGAGSKAPSVERPQSKESGREDASLIVTEEEETED</sequence>
<dbReference type="EMBL" id="BC102719">
    <property type="protein sequence ID" value="AAI02720.1"/>
    <property type="molecule type" value="mRNA"/>
</dbReference>
<dbReference type="RefSeq" id="NP_001069929.1">
    <property type="nucleotide sequence ID" value="NM_001076461.2"/>
</dbReference>
<dbReference type="FunCoup" id="Q3SZT4">
    <property type="interactions" value="3"/>
</dbReference>
<dbReference type="STRING" id="9913.ENSBTAP00000009602"/>
<dbReference type="PaxDb" id="9913-ENSBTAP00000009602"/>
<dbReference type="Ensembl" id="ENSBTAT00000009602.4">
    <property type="protein sequence ID" value="ENSBTAP00000009602.3"/>
    <property type="gene ID" value="ENSBTAG00000007298.5"/>
</dbReference>
<dbReference type="GeneID" id="617473"/>
<dbReference type="KEGG" id="bta:617473"/>
<dbReference type="CTD" id="121793"/>
<dbReference type="VEuPathDB" id="HostDB:ENSBTAG00000007298"/>
<dbReference type="VGNC" id="VGNC:35766">
    <property type="gene designation" value="TEX29"/>
</dbReference>
<dbReference type="eggNOG" id="ENOG502RWPU">
    <property type="taxonomic scope" value="Eukaryota"/>
</dbReference>
<dbReference type="GeneTree" id="ENSGT01110000271747"/>
<dbReference type="HOGENOM" id="CLU_147471_0_0_1"/>
<dbReference type="InParanoid" id="Q3SZT4"/>
<dbReference type="OMA" id="EPEFKKS"/>
<dbReference type="OrthoDB" id="9028469at2759"/>
<dbReference type="TreeFam" id="TF337066"/>
<dbReference type="Proteomes" id="UP000009136">
    <property type="component" value="Chromosome 12"/>
</dbReference>
<dbReference type="Bgee" id="ENSBTAG00000007298">
    <property type="expression patterns" value="Expressed in semen and 32 other cell types or tissues"/>
</dbReference>
<dbReference type="GO" id="GO:0016020">
    <property type="term" value="C:membrane"/>
    <property type="evidence" value="ECO:0007669"/>
    <property type="project" value="UniProtKB-SubCell"/>
</dbReference>
<dbReference type="InterPro" id="IPR031685">
    <property type="entry name" value="TEX29"/>
</dbReference>
<dbReference type="PANTHER" id="PTHR37339">
    <property type="entry name" value="TESTIS-EXPRESSED PROTEIN 29"/>
    <property type="match status" value="1"/>
</dbReference>
<dbReference type="PANTHER" id="PTHR37339:SF1">
    <property type="entry name" value="TESTIS-EXPRESSED PROTEIN 29"/>
    <property type="match status" value="1"/>
</dbReference>
<dbReference type="Pfam" id="PF15839">
    <property type="entry name" value="TEX29"/>
    <property type="match status" value="1"/>
</dbReference>
<proteinExistence type="evidence at transcript level"/>